<keyword id="KW-1003">Cell membrane</keyword>
<keyword id="KW-0201">Cytochrome c-type biogenesis</keyword>
<keyword id="KW-0349">Heme</keyword>
<keyword id="KW-0408">Iron</keyword>
<keyword id="KW-0472">Membrane</keyword>
<keyword id="KW-0479">Metal-binding</keyword>
<keyword id="KW-0735">Signal-anchor</keyword>
<keyword id="KW-0812">Transmembrane</keyword>
<keyword id="KW-1133">Transmembrane helix</keyword>
<dbReference type="EMBL" id="AM999887">
    <property type="protein sequence ID" value="CAQ55108.1"/>
    <property type="molecule type" value="Genomic_DNA"/>
</dbReference>
<dbReference type="RefSeq" id="WP_012481969.1">
    <property type="nucleotide sequence ID" value="NC_010981.1"/>
</dbReference>
<dbReference type="SMR" id="B3CMI8"/>
<dbReference type="KEGG" id="wpi:WP1000"/>
<dbReference type="eggNOG" id="COG2332">
    <property type="taxonomic scope" value="Bacteria"/>
</dbReference>
<dbReference type="HOGENOM" id="CLU_079503_1_1_5"/>
<dbReference type="Proteomes" id="UP000008814">
    <property type="component" value="Chromosome"/>
</dbReference>
<dbReference type="GO" id="GO:0005886">
    <property type="term" value="C:plasma membrane"/>
    <property type="evidence" value="ECO:0007669"/>
    <property type="project" value="UniProtKB-SubCell"/>
</dbReference>
<dbReference type="GO" id="GO:0020037">
    <property type="term" value="F:heme binding"/>
    <property type="evidence" value="ECO:0007669"/>
    <property type="project" value="InterPro"/>
</dbReference>
<dbReference type="GO" id="GO:0046872">
    <property type="term" value="F:metal ion binding"/>
    <property type="evidence" value="ECO:0007669"/>
    <property type="project" value="UniProtKB-KW"/>
</dbReference>
<dbReference type="GO" id="GO:0017004">
    <property type="term" value="P:cytochrome complex assembly"/>
    <property type="evidence" value="ECO:0007669"/>
    <property type="project" value="UniProtKB-KW"/>
</dbReference>
<dbReference type="Gene3D" id="2.40.50.140">
    <property type="entry name" value="Nucleic acid-binding proteins"/>
    <property type="match status" value="1"/>
</dbReference>
<dbReference type="HAMAP" id="MF_01959">
    <property type="entry name" value="CcmE"/>
    <property type="match status" value="1"/>
</dbReference>
<dbReference type="InterPro" id="IPR004329">
    <property type="entry name" value="CcmE"/>
</dbReference>
<dbReference type="InterPro" id="IPR036127">
    <property type="entry name" value="CcmE-like_sf"/>
</dbReference>
<dbReference type="InterPro" id="IPR012340">
    <property type="entry name" value="NA-bd_OB-fold"/>
</dbReference>
<dbReference type="NCBIfam" id="NF009727">
    <property type="entry name" value="PRK13254.1-1"/>
    <property type="match status" value="1"/>
</dbReference>
<dbReference type="PANTHER" id="PTHR34128">
    <property type="entry name" value="CYTOCHROME C-TYPE BIOGENESIS PROTEIN CCME HOMOLOG, MITOCHONDRIAL"/>
    <property type="match status" value="1"/>
</dbReference>
<dbReference type="PANTHER" id="PTHR34128:SF2">
    <property type="entry name" value="CYTOCHROME C-TYPE BIOGENESIS PROTEIN CCME HOMOLOG, MITOCHONDRIAL"/>
    <property type="match status" value="1"/>
</dbReference>
<dbReference type="Pfam" id="PF03100">
    <property type="entry name" value="CcmE"/>
    <property type="match status" value="1"/>
</dbReference>
<dbReference type="SUPFAM" id="SSF82093">
    <property type="entry name" value="Heme chaperone CcmE"/>
    <property type="match status" value="1"/>
</dbReference>
<proteinExistence type="inferred from homology"/>
<reference key="1">
    <citation type="journal article" date="2008" name="Mol. Biol. Evol.">
        <title>Genome evolution of Wolbachia strain wPip from the Culex pipiens group.</title>
        <authorList>
            <person name="Klasson L."/>
            <person name="Walker T."/>
            <person name="Sebaihia M."/>
            <person name="Sanders M.J."/>
            <person name="Quail M.A."/>
            <person name="Lord A."/>
            <person name="Sanders S."/>
            <person name="Earl J."/>
            <person name="O'Neill S.L."/>
            <person name="Thomson N."/>
            <person name="Sinkins S.P."/>
            <person name="Parkhill J."/>
        </authorList>
    </citation>
    <scope>NUCLEOTIDE SEQUENCE [LARGE SCALE GENOMIC DNA]</scope>
    <source>
        <strain>wPip</strain>
    </source>
</reference>
<organism>
    <name type="scientific">Wolbachia pipientis subsp. Culex pipiens (strain wPip)</name>
    <dbReference type="NCBI Taxonomy" id="570417"/>
    <lineage>
        <taxon>Bacteria</taxon>
        <taxon>Pseudomonadati</taxon>
        <taxon>Pseudomonadota</taxon>
        <taxon>Alphaproteobacteria</taxon>
        <taxon>Rickettsiales</taxon>
        <taxon>Anaplasmataceae</taxon>
        <taxon>Wolbachieae</taxon>
        <taxon>Wolbachia</taxon>
    </lineage>
</organism>
<accession>B3CMI8</accession>
<feature type="chain" id="PRO_1000189059" description="Cytochrome c-type biogenesis protein CcmE">
    <location>
        <begin position="1"/>
        <end position="130"/>
    </location>
</feature>
<feature type="topological domain" description="Cytoplasmic" evidence="1">
    <location>
        <begin position="1"/>
        <end position="7"/>
    </location>
</feature>
<feature type="transmembrane region" description="Helical; Signal-anchor for type II membrane protein" evidence="1">
    <location>
        <begin position="8"/>
        <end position="28"/>
    </location>
</feature>
<feature type="topological domain" description="Extracellular" evidence="1">
    <location>
        <begin position="29"/>
        <end position="130"/>
    </location>
</feature>
<feature type="binding site" description="covalent" evidence="1">
    <location>
        <position position="120"/>
    </location>
    <ligand>
        <name>heme</name>
        <dbReference type="ChEBI" id="CHEBI:30413"/>
    </ligand>
</feature>
<feature type="binding site" description="axial binding residue" evidence="1">
    <location>
        <position position="124"/>
    </location>
    <ligand>
        <name>heme</name>
        <dbReference type="ChEBI" id="CHEBI:30413"/>
    </ligand>
    <ligandPart>
        <name>Fe</name>
        <dbReference type="ChEBI" id="CHEBI:18248"/>
    </ligandPart>
</feature>
<name>CCME_WOLPP</name>
<evidence type="ECO:0000255" key="1">
    <source>
        <dbReference type="HAMAP-Rule" id="MF_01959"/>
    </source>
</evidence>
<protein>
    <recommendedName>
        <fullName evidence="1">Cytochrome c-type biogenesis protein CcmE</fullName>
    </recommendedName>
    <alternativeName>
        <fullName evidence="1">Cytochrome c maturation protein E</fullName>
    </alternativeName>
    <alternativeName>
        <fullName evidence="1">Heme chaperone CcmE</fullName>
    </alternativeName>
</protein>
<gene>
    <name evidence="1" type="primary">ccmE</name>
    <name evidence="1" type="synonym">cycJ</name>
    <name type="ordered locus">WP1000</name>
</gene>
<sequence>MKKKHKRLLITSGIFCFLSCAVFFILTTLKENISFFYTVSEAIVLPNNQKPIRVGGMIVENSVIRSESEVIFQMTDFNKSVMVKYQGILPPMFSEKSGVVVQGKMFDNGTFLADTVFAKHDENYKPKVLK</sequence>
<comment type="function">
    <text evidence="1">Heme chaperone required for the biogenesis of c-type cytochromes. Transiently binds heme delivered by CcmC and transfers the heme to apo-cytochromes in a process facilitated by CcmF and CcmH.</text>
</comment>
<comment type="subcellular location">
    <subcellularLocation>
        <location evidence="1">Cell membrane</location>
        <topology evidence="1">Single-pass type II membrane protein</topology>
    </subcellularLocation>
</comment>
<comment type="similarity">
    <text evidence="1">Belongs to the CcmE/CycJ family.</text>
</comment>